<gene>
    <name type="primary">tsr1</name>
</gene>
<reference key="1">
    <citation type="submission" date="2004-10" db="EMBL/GenBank/DDBJ databases">
        <authorList>
            <consortium name="NIH - Xenopus Gene Collection (XGC) project"/>
        </authorList>
    </citation>
    <scope>NUCLEOTIDE SEQUENCE [LARGE SCALE MRNA]</scope>
    <source>
        <tissue>Ovary</tissue>
    </source>
</reference>
<organism>
    <name type="scientific">Xenopus laevis</name>
    <name type="common">African clawed frog</name>
    <dbReference type="NCBI Taxonomy" id="8355"/>
    <lineage>
        <taxon>Eukaryota</taxon>
        <taxon>Metazoa</taxon>
        <taxon>Chordata</taxon>
        <taxon>Craniata</taxon>
        <taxon>Vertebrata</taxon>
        <taxon>Euteleostomi</taxon>
        <taxon>Amphibia</taxon>
        <taxon>Batrachia</taxon>
        <taxon>Anura</taxon>
        <taxon>Pipoidea</taxon>
        <taxon>Pipidae</taxon>
        <taxon>Xenopodinae</taxon>
        <taxon>Xenopus</taxon>
        <taxon>Xenopus</taxon>
    </lineage>
</organism>
<protein>
    <recommendedName>
        <fullName>Pre-rRNA-processing protein TSR1 homolog</fullName>
    </recommendedName>
</protein>
<accession>Q5XGY1</accession>
<dbReference type="EMBL" id="BC084296">
    <property type="protein sequence ID" value="AAH84296.1"/>
    <property type="molecule type" value="mRNA"/>
</dbReference>
<dbReference type="RefSeq" id="NP_001088282.1">
    <property type="nucleotide sequence ID" value="NM_001094813.1"/>
</dbReference>
<dbReference type="SMR" id="Q5XGY1"/>
<dbReference type="BioGRID" id="105195">
    <property type="interactions" value="1"/>
</dbReference>
<dbReference type="IntAct" id="Q5XGY1">
    <property type="interactions" value="1"/>
</dbReference>
<dbReference type="GeneID" id="495115"/>
<dbReference type="KEGG" id="xla:495115"/>
<dbReference type="AGR" id="Xenbase:XB-GENE-5753645"/>
<dbReference type="CTD" id="495115"/>
<dbReference type="Xenbase" id="XB-GENE-5753645">
    <property type="gene designation" value="tsr1.L"/>
</dbReference>
<dbReference type="OrthoDB" id="119302at2759"/>
<dbReference type="Proteomes" id="UP000186698">
    <property type="component" value="Chromosome 2L"/>
</dbReference>
<dbReference type="Bgee" id="495115">
    <property type="expression patterns" value="Expressed in neurula embryo and 19 other cell types or tissues"/>
</dbReference>
<dbReference type="GO" id="GO:0005730">
    <property type="term" value="C:nucleolus"/>
    <property type="evidence" value="ECO:0000250"/>
    <property type="project" value="UniProtKB"/>
</dbReference>
<dbReference type="GO" id="GO:0030688">
    <property type="term" value="C:preribosome, small subunit precursor"/>
    <property type="evidence" value="ECO:0007669"/>
    <property type="project" value="TreeGrafter"/>
</dbReference>
<dbReference type="GO" id="GO:0005525">
    <property type="term" value="F:GTP binding"/>
    <property type="evidence" value="ECO:0000318"/>
    <property type="project" value="GO_Central"/>
</dbReference>
<dbReference type="GO" id="GO:0003924">
    <property type="term" value="F:GTPase activity"/>
    <property type="evidence" value="ECO:0000318"/>
    <property type="project" value="GO_Central"/>
</dbReference>
<dbReference type="GO" id="GO:0034511">
    <property type="term" value="F:U3 snoRNA binding"/>
    <property type="evidence" value="ECO:0000318"/>
    <property type="project" value="GO_Central"/>
</dbReference>
<dbReference type="GO" id="GO:0000479">
    <property type="term" value="P:endonucleolytic cleavage of tricistronic rRNA transcript (SSU-rRNA, 5.8S rRNA, LSU-rRNA)"/>
    <property type="evidence" value="ECO:0000318"/>
    <property type="project" value="GO_Central"/>
</dbReference>
<dbReference type="GO" id="GO:0000462">
    <property type="term" value="P:maturation of SSU-rRNA from tricistronic rRNA transcript (SSU-rRNA, 5.8S rRNA, LSU-rRNA)"/>
    <property type="evidence" value="ECO:0000318"/>
    <property type="project" value="GO_Central"/>
</dbReference>
<dbReference type="InterPro" id="IPR012948">
    <property type="entry name" value="AARP2CN"/>
</dbReference>
<dbReference type="InterPro" id="IPR039761">
    <property type="entry name" value="Bms1/Tsr1"/>
</dbReference>
<dbReference type="InterPro" id="IPR007034">
    <property type="entry name" value="BMS1_TSR1_C"/>
</dbReference>
<dbReference type="InterPro" id="IPR030387">
    <property type="entry name" value="G_Bms1/Tsr1_dom"/>
</dbReference>
<dbReference type="PANTHER" id="PTHR12858:SF1">
    <property type="entry name" value="PRE-RRNA-PROCESSING PROTEIN TSR1 HOMOLOG"/>
    <property type="match status" value="1"/>
</dbReference>
<dbReference type="PANTHER" id="PTHR12858">
    <property type="entry name" value="RIBOSOME BIOGENESIS PROTEIN"/>
    <property type="match status" value="1"/>
</dbReference>
<dbReference type="Pfam" id="PF08142">
    <property type="entry name" value="AARP2CN"/>
    <property type="match status" value="1"/>
</dbReference>
<dbReference type="Pfam" id="PF04950">
    <property type="entry name" value="RIBIOP_C"/>
    <property type="match status" value="1"/>
</dbReference>
<dbReference type="Pfam" id="PF22298">
    <property type="entry name" value="Tsr1_G-like"/>
    <property type="match status" value="1"/>
</dbReference>
<dbReference type="SMART" id="SM00785">
    <property type="entry name" value="AARP2CN"/>
    <property type="match status" value="1"/>
</dbReference>
<dbReference type="SMART" id="SM01362">
    <property type="entry name" value="DUF663"/>
    <property type="match status" value="1"/>
</dbReference>
<dbReference type="PROSITE" id="PS51714">
    <property type="entry name" value="G_BMS1"/>
    <property type="match status" value="1"/>
</dbReference>
<name>TSR1_XENLA</name>
<comment type="function">
    <text evidence="1">Required during maturation of the 40S ribosomal subunit in the nucleolus.</text>
</comment>
<comment type="subcellular location">
    <subcellularLocation>
        <location evidence="1">Nucleus</location>
        <location evidence="1">Nucleolus</location>
    </subcellularLocation>
</comment>
<comment type="similarity">
    <text evidence="4">Belongs to the TRAFAC class translation factor GTPase superfamily. Bms1-like GTPase family. TSR1 subfamily.</text>
</comment>
<sequence length="815" mass="93610">MAAGEQQAAHRPGAYKQQNKPHKSGRHRGRGAQDRENKGRVAAKILGKKNKKDLRKLDRRHKANQIRRQRKDAVLAEKRSLGTKDGPPHLVIAISLHARAVKDDLFSLVQNNEGDILHVNDQIKGLLALVCPKVKQRWCFIQANRDDLCSLLDLAKVADTLLFLLDPQEGWDSYGDYCLSCLFAQGLPSYVLAVQGMNYIPIKKRADIKKQLSKVIENRFTDAKLFQLDTEQEAAVLIRQISTQKQRHLAFRSRRSYMLAQRADFQPTDESGLVGTLKLSGYVRGQELNVNRLVHIVGHGDFHMSQIDAPPDPYPLNPRVHKPKTKSGQDMEMSDEPATGSEMEQDIKVLMKADPSAQESLQCEVVPDPMEGEQTWPTEEELKEAEDALKGTSKVVKKVPKGTSAYQAAWILDDEGDGEEESDDDDDEDMEEDAEDAMDDAYSEEEDGSGNEEAEESETLTIPDSTRDDKYDENVDEQEEEQMLEKYKLQRQDEVFPDEVDTPRDQIARIRFQKYRGLKSFRTSPWDVKENLPRDYARIFQFHDFFRTRKRVFKEEEEKDEGAMVGWYVTVHISAVPVSVMEHFKHGLPLVLCSLLPHEQKMSVMNMLVRRHPGNNEPIKAKEELIFHCGFRRFRASPLFSQHSSADKHKSERFLRSDTSVVVTVYAPITFPPASVLVFKQRYNGMQDLVATGSLLNVNPDRIVIKRIVLSGHPFKIMKRTAVVRYMFFNREDVLWFKPVELRTKWGRRGHIKEPLGTHGHMKCHFDGQLKSQDTVLMNLYKRVYPKWTFDPYVPRPVTWVKNENTVDITEVEMD</sequence>
<feature type="chain" id="PRO_0000311277" description="Pre-rRNA-processing protein TSR1 homolog">
    <location>
        <begin position="1"/>
        <end position="815"/>
    </location>
</feature>
<feature type="domain" description="Bms1-type G" evidence="2">
    <location>
        <begin position="87"/>
        <end position="247"/>
    </location>
</feature>
<feature type="region of interest" description="Disordered" evidence="3">
    <location>
        <begin position="1"/>
        <end position="51"/>
    </location>
</feature>
<feature type="region of interest" description="Disordered" evidence="3">
    <location>
        <begin position="320"/>
        <end position="342"/>
    </location>
</feature>
<feature type="region of interest" description="Disordered" evidence="3">
    <location>
        <begin position="408"/>
        <end position="482"/>
    </location>
</feature>
<feature type="compositionally biased region" description="Basic residues" evidence="3">
    <location>
        <begin position="19"/>
        <end position="30"/>
    </location>
</feature>
<feature type="compositionally biased region" description="Acidic residues" evidence="3">
    <location>
        <begin position="412"/>
        <end position="458"/>
    </location>
</feature>
<proteinExistence type="evidence at transcript level"/>
<evidence type="ECO:0000250" key="1"/>
<evidence type="ECO:0000255" key="2">
    <source>
        <dbReference type="PROSITE-ProRule" id="PRU01051"/>
    </source>
</evidence>
<evidence type="ECO:0000256" key="3">
    <source>
        <dbReference type="SAM" id="MobiDB-lite"/>
    </source>
</evidence>
<evidence type="ECO:0000305" key="4"/>
<keyword id="KW-0539">Nucleus</keyword>
<keyword id="KW-1185">Reference proteome</keyword>
<keyword id="KW-0690">Ribosome biogenesis</keyword>